<sequence>MTEKATAPGEGANDLSMAVLNAIQNPVILVDENGFVAFANWEAESFFGASANHLARHDISAFIPFGSPLLTLIEQVRERRAAVNEYRVDLSSPRLGADKLVDLYVAPVLSQPGSVVIVFQERSMADKIDRQLTHRAAARSVTGLASMLAHEIKNPLSGIRGAAQLLETSVNDEDRSLTRLICDETDRIVSLVDRMEVFSDERPVDRLPLNIHAVLDHVKAIAKAGFARRIKISEHYDPSLPPVFANRDQLVQVFLNLIKNAAEAIGDRADGEILLTTAYRPGIRLSVAGTREKISLPLEFCVHDNGPGVPPDLLPHLFDPFITTKTNGSGLGLALVAKIIGGHGGIVECDSQHSRTTFRVLMPASKGLAADEETPMTKGTNG</sequence>
<protein>
    <recommendedName>
        <fullName evidence="1">Sensory histidine kinase/phosphatase NtrB</fullName>
        <ecNumber evidence="1">2.7.13.3</ecNumber>
        <ecNumber evidence="1">3.1.3.-</ecNumber>
    </recommendedName>
    <alternativeName>
        <fullName evidence="1">Nitrogen regulation protein NR(II)</fullName>
    </alternativeName>
    <alternativeName>
        <fullName evidence="1">Nitrogen regulator II</fullName>
        <shortName evidence="1">NRII</shortName>
    </alternativeName>
</protein>
<dbReference type="EC" id="2.7.13.3" evidence="1"/>
<dbReference type="EC" id="3.1.3.-" evidence="1"/>
<dbReference type="EMBL" id="AL591688">
    <property type="protein sequence ID" value="CAC46037.1"/>
    <property type="molecule type" value="Genomic_DNA"/>
</dbReference>
<dbReference type="EMBL" id="M15810">
    <property type="protein sequence ID" value="AAA26345.1"/>
    <property type="molecule type" value="Genomic_DNA"/>
</dbReference>
<dbReference type="RefSeq" id="NP_385564.1">
    <property type="nucleotide sequence ID" value="NC_003047.1"/>
</dbReference>
<dbReference type="RefSeq" id="WP_010969237.1">
    <property type="nucleotide sequence ID" value="NC_003047.1"/>
</dbReference>
<dbReference type="SMR" id="Q52977"/>
<dbReference type="EnsemblBacteria" id="CAC46037">
    <property type="protein sequence ID" value="CAC46037"/>
    <property type="gene ID" value="SMc01042"/>
</dbReference>
<dbReference type="KEGG" id="sme:SMc01042"/>
<dbReference type="PATRIC" id="fig|266834.11.peg.2877"/>
<dbReference type="eggNOG" id="COG3852">
    <property type="taxonomic scope" value="Bacteria"/>
</dbReference>
<dbReference type="HOGENOM" id="CLU_000445_114_39_5"/>
<dbReference type="OrthoDB" id="9789238at2"/>
<dbReference type="BRENDA" id="2.7.13.3">
    <property type="organism ID" value="5347"/>
</dbReference>
<dbReference type="Proteomes" id="UP000001976">
    <property type="component" value="Chromosome"/>
</dbReference>
<dbReference type="GO" id="GO:0005737">
    <property type="term" value="C:cytoplasm"/>
    <property type="evidence" value="ECO:0007669"/>
    <property type="project" value="UniProtKB-SubCell"/>
</dbReference>
<dbReference type="GO" id="GO:0005524">
    <property type="term" value="F:ATP binding"/>
    <property type="evidence" value="ECO:0007669"/>
    <property type="project" value="UniProtKB-KW"/>
</dbReference>
<dbReference type="GO" id="GO:0016787">
    <property type="term" value="F:hydrolase activity"/>
    <property type="evidence" value="ECO:0007669"/>
    <property type="project" value="UniProtKB-KW"/>
</dbReference>
<dbReference type="GO" id="GO:0000155">
    <property type="term" value="F:phosphorelay sensor kinase activity"/>
    <property type="evidence" value="ECO:0007669"/>
    <property type="project" value="InterPro"/>
</dbReference>
<dbReference type="GO" id="GO:0009399">
    <property type="term" value="P:nitrogen fixation"/>
    <property type="evidence" value="ECO:0007669"/>
    <property type="project" value="UniProtKB-KW"/>
</dbReference>
<dbReference type="GO" id="GO:0006355">
    <property type="term" value="P:regulation of DNA-templated transcription"/>
    <property type="evidence" value="ECO:0007669"/>
    <property type="project" value="InterPro"/>
</dbReference>
<dbReference type="CDD" id="cd00082">
    <property type="entry name" value="HisKA"/>
    <property type="match status" value="1"/>
</dbReference>
<dbReference type="Gene3D" id="1.10.287.130">
    <property type="match status" value="1"/>
</dbReference>
<dbReference type="Gene3D" id="3.30.565.10">
    <property type="entry name" value="Histidine kinase-like ATPase, C-terminal domain"/>
    <property type="match status" value="1"/>
</dbReference>
<dbReference type="Gene3D" id="3.30.450.20">
    <property type="entry name" value="PAS domain"/>
    <property type="match status" value="1"/>
</dbReference>
<dbReference type="InterPro" id="IPR036890">
    <property type="entry name" value="HATPase_C_sf"/>
</dbReference>
<dbReference type="InterPro" id="IPR005467">
    <property type="entry name" value="His_kinase_dom"/>
</dbReference>
<dbReference type="InterPro" id="IPR003661">
    <property type="entry name" value="HisK_dim/P_dom"/>
</dbReference>
<dbReference type="InterPro" id="IPR036097">
    <property type="entry name" value="HisK_dim/P_sf"/>
</dbReference>
<dbReference type="InterPro" id="IPR035965">
    <property type="entry name" value="PAS-like_dom_sf"/>
</dbReference>
<dbReference type="InterPro" id="IPR013767">
    <property type="entry name" value="PAS_fold"/>
</dbReference>
<dbReference type="InterPro" id="IPR004358">
    <property type="entry name" value="Sig_transdc_His_kin-like_C"/>
</dbReference>
<dbReference type="PANTHER" id="PTHR43065:SF10">
    <property type="entry name" value="PEROXIDE STRESS-ACTIVATED HISTIDINE KINASE MAK3"/>
    <property type="match status" value="1"/>
</dbReference>
<dbReference type="PANTHER" id="PTHR43065">
    <property type="entry name" value="SENSOR HISTIDINE KINASE"/>
    <property type="match status" value="1"/>
</dbReference>
<dbReference type="Pfam" id="PF02518">
    <property type="entry name" value="HATPase_c"/>
    <property type="match status" value="1"/>
</dbReference>
<dbReference type="Pfam" id="PF00512">
    <property type="entry name" value="HisKA"/>
    <property type="match status" value="1"/>
</dbReference>
<dbReference type="Pfam" id="PF00989">
    <property type="entry name" value="PAS"/>
    <property type="match status" value="1"/>
</dbReference>
<dbReference type="PRINTS" id="PR00344">
    <property type="entry name" value="BCTRLSENSOR"/>
</dbReference>
<dbReference type="SMART" id="SM00387">
    <property type="entry name" value="HATPase_c"/>
    <property type="match status" value="1"/>
</dbReference>
<dbReference type="SMART" id="SM00388">
    <property type="entry name" value="HisKA"/>
    <property type="match status" value="1"/>
</dbReference>
<dbReference type="SUPFAM" id="SSF55874">
    <property type="entry name" value="ATPase domain of HSP90 chaperone/DNA topoisomerase II/histidine kinase"/>
    <property type="match status" value="1"/>
</dbReference>
<dbReference type="SUPFAM" id="SSF47384">
    <property type="entry name" value="Homodimeric domain of signal transducing histidine kinase"/>
    <property type="match status" value="1"/>
</dbReference>
<dbReference type="SUPFAM" id="SSF55785">
    <property type="entry name" value="PYP-like sensor domain (PAS domain)"/>
    <property type="match status" value="1"/>
</dbReference>
<dbReference type="PROSITE" id="PS50109">
    <property type="entry name" value="HIS_KIN"/>
    <property type="match status" value="1"/>
</dbReference>
<accession>Q52977</accession>
<feature type="chain" id="PRO_0000074831" description="Sensory histidine kinase/phosphatase NtrB">
    <location>
        <begin position="1"/>
        <end position="382"/>
    </location>
</feature>
<feature type="domain" description="PAS">
    <location>
        <begin position="14"/>
        <end position="81"/>
    </location>
</feature>
<feature type="domain" description="Histidine kinase" evidence="2">
    <location>
        <begin position="147"/>
        <end position="366"/>
    </location>
</feature>
<feature type="modified residue" description="Phosphohistidine; by autocatalysis" evidence="2">
    <location>
        <position position="150"/>
    </location>
</feature>
<reference key="1">
    <citation type="journal article" date="2001" name="Proc. Natl. Acad. Sci. U.S.A.">
        <title>Analysis of the chromosome sequence of the legume symbiont Sinorhizobium meliloti strain 1021.</title>
        <authorList>
            <person name="Capela D."/>
            <person name="Barloy-Hubler F."/>
            <person name="Gouzy J."/>
            <person name="Bothe G."/>
            <person name="Ampe F."/>
            <person name="Batut J."/>
            <person name="Boistard P."/>
            <person name="Becker A."/>
            <person name="Boutry M."/>
            <person name="Cadieu E."/>
            <person name="Dreano S."/>
            <person name="Gloux S."/>
            <person name="Godrie T."/>
            <person name="Goffeau A."/>
            <person name="Kahn D."/>
            <person name="Kiss E."/>
            <person name="Lelaure V."/>
            <person name="Masuy D."/>
            <person name="Pohl T."/>
            <person name="Portetelle D."/>
            <person name="Puehler A."/>
            <person name="Purnelle B."/>
            <person name="Ramsperger U."/>
            <person name="Renard C."/>
            <person name="Thebault P."/>
            <person name="Vandenbol M."/>
            <person name="Weidner S."/>
            <person name="Galibert F."/>
        </authorList>
    </citation>
    <scope>NUCLEOTIDE SEQUENCE [LARGE SCALE GENOMIC DNA]</scope>
    <source>
        <strain>1021</strain>
    </source>
</reference>
<reference key="2">
    <citation type="journal article" date="2001" name="Science">
        <title>The composite genome of the legume symbiont Sinorhizobium meliloti.</title>
        <authorList>
            <person name="Galibert F."/>
            <person name="Finan T.M."/>
            <person name="Long S.R."/>
            <person name="Puehler A."/>
            <person name="Abola P."/>
            <person name="Ampe F."/>
            <person name="Barloy-Hubler F."/>
            <person name="Barnett M.J."/>
            <person name="Becker A."/>
            <person name="Boistard P."/>
            <person name="Bothe G."/>
            <person name="Boutry M."/>
            <person name="Bowser L."/>
            <person name="Buhrmester J."/>
            <person name="Cadieu E."/>
            <person name="Capela D."/>
            <person name="Chain P."/>
            <person name="Cowie A."/>
            <person name="Davis R.W."/>
            <person name="Dreano S."/>
            <person name="Federspiel N.A."/>
            <person name="Fisher R.F."/>
            <person name="Gloux S."/>
            <person name="Godrie T."/>
            <person name="Goffeau A."/>
            <person name="Golding B."/>
            <person name="Gouzy J."/>
            <person name="Gurjal M."/>
            <person name="Hernandez-Lucas I."/>
            <person name="Hong A."/>
            <person name="Huizar L."/>
            <person name="Hyman R.W."/>
            <person name="Jones T."/>
            <person name="Kahn D."/>
            <person name="Kahn M.L."/>
            <person name="Kalman S."/>
            <person name="Keating D.H."/>
            <person name="Kiss E."/>
            <person name="Komp C."/>
            <person name="Lelaure V."/>
            <person name="Masuy D."/>
            <person name="Palm C."/>
            <person name="Peck M.C."/>
            <person name="Pohl T.M."/>
            <person name="Portetelle D."/>
            <person name="Purnelle B."/>
            <person name="Ramsperger U."/>
            <person name="Surzycki R."/>
            <person name="Thebault P."/>
            <person name="Vandenbol M."/>
            <person name="Vorhoelter F.J."/>
            <person name="Weidner S."/>
            <person name="Wells D.H."/>
            <person name="Wong K."/>
            <person name="Yeh K.-C."/>
            <person name="Batut J."/>
        </authorList>
    </citation>
    <scope>NUCLEOTIDE SEQUENCE [LARGE SCALE GENOMIC DNA]</scope>
    <source>
        <strain>1021</strain>
    </source>
</reference>
<reference key="3">
    <citation type="journal article" date="1987" name="J. Bacteriol.">
        <title>Identification and characterization of the Rhizobium meliloti ntrC gene: R. meliloti has separate regulatory pathways for activation of nitrogen fixation genes in free-living and symbiotic cells.</title>
        <authorList>
            <person name="Szeto W.W."/>
            <person name="Nixon B.T."/>
            <person name="Ronson C.W."/>
            <person name="Ausubel F.M."/>
        </authorList>
    </citation>
    <scope>NUCLEOTIDE SEQUENCE [GENOMIC DNA] OF 299-382</scope>
</reference>
<keyword id="KW-0067">ATP-binding</keyword>
<keyword id="KW-0963">Cytoplasm</keyword>
<keyword id="KW-0378">Hydrolase</keyword>
<keyword id="KW-0418">Kinase</keyword>
<keyword id="KW-0535">Nitrogen fixation</keyword>
<keyword id="KW-0547">Nucleotide-binding</keyword>
<keyword id="KW-0597">Phosphoprotein</keyword>
<keyword id="KW-1185">Reference proteome</keyword>
<keyword id="KW-0808">Transferase</keyword>
<keyword id="KW-0902">Two-component regulatory system</keyword>
<evidence type="ECO:0000250" key="1">
    <source>
        <dbReference type="UniProtKB" id="P0AFB5"/>
    </source>
</evidence>
<evidence type="ECO:0000255" key="2">
    <source>
        <dbReference type="PROSITE-ProRule" id="PRU00107"/>
    </source>
</evidence>
<gene>
    <name type="primary">ntrB</name>
    <name type="ordered locus">R01458</name>
    <name type="ORF">SMc01042</name>
</gene>
<organism>
    <name type="scientific">Rhizobium meliloti (strain 1021)</name>
    <name type="common">Ensifer meliloti</name>
    <name type="synonym">Sinorhizobium meliloti</name>
    <dbReference type="NCBI Taxonomy" id="266834"/>
    <lineage>
        <taxon>Bacteria</taxon>
        <taxon>Pseudomonadati</taxon>
        <taxon>Pseudomonadota</taxon>
        <taxon>Alphaproteobacteria</taxon>
        <taxon>Hyphomicrobiales</taxon>
        <taxon>Rhizobiaceae</taxon>
        <taxon>Sinorhizobium/Ensifer group</taxon>
        <taxon>Sinorhizobium</taxon>
    </lineage>
</organism>
<comment type="function">
    <text evidence="1">Member of the two-component regulatory system NtrB/NtrC, which controls expression of the nitrogen-regulated (ntr) genes in response to nitrogen limitation. Under conditions of nitrogen limitation, NtrB autophosphorylates and transfers the phosphoryl group to NtrC. In the presence of nitrogen, acts as a phosphatase that dephosphorylates and inactivates NtrC.</text>
</comment>
<comment type="catalytic activity">
    <reaction evidence="1">
        <text>ATP + protein L-histidine = ADP + protein N-phospho-L-histidine.</text>
        <dbReference type="EC" id="2.7.13.3"/>
    </reaction>
</comment>
<comment type="subcellular location">
    <subcellularLocation>
        <location evidence="1">Cytoplasm</location>
    </subcellularLocation>
</comment>
<comment type="PTM">
    <text evidence="1">Autophosphorylated.</text>
</comment>
<name>NTRB_RHIME</name>
<proteinExistence type="inferred from homology"/>